<protein>
    <recommendedName>
        <fullName evidence="1">Elongation factor 4</fullName>
        <shortName evidence="1">EF-4</shortName>
        <ecNumber evidence="1">3.6.5.n1</ecNumber>
    </recommendedName>
    <alternativeName>
        <fullName evidence="1">Ribosomal back-translocase LepA</fullName>
    </alternativeName>
</protein>
<evidence type="ECO:0000255" key="1">
    <source>
        <dbReference type="HAMAP-Rule" id="MF_00071"/>
    </source>
</evidence>
<name>LEPA_RHIWR</name>
<gene>
    <name evidence="1" type="primary">lepA</name>
    <name type="ordered locus">Swit_3177</name>
</gene>
<dbReference type="EC" id="3.6.5.n1" evidence="1"/>
<dbReference type="EMBL" id="CP000699">
    <property type="protein sequence ID" value="ABQ69525.1"/>
    <property type="molecule type" value="Genomic_DNA"/>
</dbReference>
<dbReference type="SMR" id="A5VB59"/>
<dbReference type="STRING" id="392499.Swit_3177"/>
<dbReference type="PaxDb" id="392499-Swit_3177"/>
<dbReference type="KEGG" id="swi:Swit_3177"/>
<dbReference type="eggNOG" id="COG0481">
    <property type="taxonomic scope" value="Bacteria"/>
</dbReference>
<dbReference type="HOGENOM" id="CLU_009995_3_3_5"/>
<dbReference type="OrthoDB" id="9802948at2"/>
<dbReference type="Proteomes" id="UP000001989">
    <property type="component" value="Chromosome"/>
</dbReference>
<dbReference type="GO" id="GO:0005886">
    <property type="term" value="C:plasma membrane"/>
    <property type="evidence" value="ECO:0007669"/>
    <property type="project" value="UniProtKB-SubCell"/>
</dbReference>
<dbReference type="GO" id="GO:0005525">
    <property type="term" value="F:GTP binding"/>
    <property type="evidence" value="ECO:0007669"/>
    <property type="project" value="UniProtKB-UniRule"/>
</dbReference>
<dbReference type="GO" id="GO:0003924">
    <property type="term" value="F:GTPase activity"/>
    <property type="evidence" value="ECO:0007669"/>
    <property type="project" value="UniProtKB-UniRule"/>
</dbReference>
<dbReference type="GO" id="GO:0097216">
    <property type="term" value="F:guanosine tetraphosphate binding"/>
    <property type="evidence" value="ECO:0007669"/>
    <property type="project" value="UniProtKB-ARBA"/>
</dbReference>
<dbReference type="GO" id="GO:0043022">
    <property type="term" value="F:ribosome binding"/>
    <property type="evidence" value="ECO:0007669"/>
    <property type="project" value="UniProtKB-UniRule"/>
</dbReference>
<dbReference type="GO" id="GO:0003746">
    <property type="term" value="F:translation elongation factor activity"/>
    <property type="evidence" value="ECO:0007669"/>
    <property type="project" value="UniProtKB-UniRule"/>
</dbReference>
<dbReference type="GO" id="GO:0045727">
    <property type="term" value="P:positive regulation of translation"/>
    <property type="evidence" value="ECO:0007669"/>
    <property type="project" value="UniProtKB-UniRule"/>
</dbReference>
<dbReference type="CDD" id="cd03699">
    <property type="entry name" value="EF4_II"/>
    <property type="match status" value="1"/>
</dbReference>
<dbReference type="CDD" id="cd16260">
    <property type="entry name" value="EF4_III"/>
    <property type="match status" value="1"/>
</dbReference>
<dbReference type="CDD" id="cd01890">
    <property type="entry name" value="LepA"/>
    <property type="match status" value="1"/>
</dbReference>
<dbReference type="CDD" id="cd03709">
    <property type="entry name" value="lepA_C"/>
    <property type="match status" value="1"/>
</dbReference>
<dbReference type="FunFam" id="3.40.50.300:FF:000078">
    <property type="entry name" value="Elongation factor 4"/>
    <property type="match status" value="1"/>
</dbReference>
<dbReference type="FunFam" id="2.40.30.10:FF:000015">
    <property type="entry name" value="Translation factor GUF1, mitochondrial"/>
    <property type="match status" value="1"/>
</dbReference>
<dbReference type="FunFam" id="3.30.70.240:FF:000007">
    <property type="entry name" value="Translation factor GUF1, mitochondrial"/>
    <property type="match status" value="1"/>
</dbReference>
<dbReference type="FunFam" id="3.30.70.2570:FF:000001">
    <property type="entry name" value="Translation factor GUF1, mitochondrial"/>
    <property type="match status" value="1"/>
</dbReference>
<dbReference type="FunFam" id="3.30.70.870:FF:000004">
    <property type="entry name" value="Translation factor GUF1, mitochondrial"/>
    <property type="match status" value="1"/>
</dbReference>
<dbReference type="Gene3D" id="3.30.70.240">
    <property type="match status" value="1"/>
</dbReference>
<dbReference type="Gene3D" id="3.30.70.2570">
    <property type="entry name" value="Elongation factor 4, C-terminal domain"/>
    <property type="match status" value="1"/>
</dbReference>
<dbReference type="Gene3D" id="3.30.70.870">
    <property type="entry name" value="Elongation Factor G (Translational Gtpase), domain 3"/>
    <property type="match status" value="1"/>
</dbReference>
<dbReference type="Gene3D" id="3.40.50.300">
    <property type="entry name" value="P-loop containing nucleotide triphosphate hydrolases"/>
    <property type="match status" value="1"/>
</dbReference>
<dbReference type="Gene3D" id="2.40.30.10">
    <property type="entry name" value="Translation factors"/>
    <property type="match status" value="1"/>
</dbReference>
<dbReference type="HAMAP" id="MF_00071">
    <property type="entry name" value="LepA"/>
    <property type="match status" value="1"/>
</dbReference>
<dbReference type="InterPro" id="IPR006297">
    <property type="entry name" value="EF-4"/>
</dbReference>
<dbReference type="InterPro" id="IPR035647">
    <property type="entry name" value="EFG_III/V"/>
</dbReference>
<dbReference type="InterPro" id="IPR000640">
    <property type="entry name" value="EFG_V-like"/>
</dbReference>
<dbReference type="InterPro" id="IPR004161">
    <property type="entry name" value="EFTu-like_2"/>
</dbReference>
<dbReference type="InterPro" id="IPR031157">
    <property type="entry name" value="G_TR_CS"/>
</dbReference>
<dbReference type="InterPro" id="IPR038363">
    <property type="entry name" value="LepA_C_sf"/>
</dbReference>
<dbReference type="InterPro" id="IPR013842">
    <property type="entry name" value="LepA_CTD"/>
</dbReference>
<dbReference type="InterPro" id="IPR035654">
    <property type="entry name" value="LepA_IV"/>
</dbReference>
<dbReference type="InterPro" id="IPR027417">
    <property type="entry name" value="P-loop_NTPase"/>
</dbReference>
<dbReference type="InterPro" id="IPR005225">
    <property type="entry name" value="Small_GTP-bd"/>
</dbReference>
<dbReference type="InterPro" id="IPR000795">
    <property type="entry name" value="T_Tr_GTP-bd_dom"/>
</dbReference>
<dbReference type="InterPro" id="IPR009000">
    <property type="entry name" value="Transl_B-barrel_sf"/>
</dbReference>
<dbReference type="NCBIfam" id="TIGR01393">
    <property type="entry name" value="lepA"/>
    <property type="match status" value="1"/>
</dbReference>
<dbReference type="NCBIfam" id="TIGR00231">
    <property type="entry name" value="small_GTP"/>
    <property type="match status" value="1"/>
</dbReference>
<dbReference type="PANTHER" id="PTHR43512:SF4">
    <property type="entry name" value="TRANSLATION FACTOR GUF1 HOMOLOG, CHLOROPLASTIC"/>
    <property type="match status" value="1"/>
</dbReference>
<dbReference type="PANTHER" id="PTHR43512">
    <property type="entry name" value="TRANSLATION FACTOR GUF1-RELATED"/>
    <property type="match status" value="1"/>
</dbReference>
<dbReference type="Pfam" id="PF00679">
    <property type="entry name" value="EFG_C"/>
    <property type="match status" value="1"/>
</dbReference>
<dbReference type="Pfam" id="PF00009">
    <property type="entry name" value="GTP_EFTU"/>
    <property type="match status" value="1"/>
</dbReference>
<dbReference type="Pfam" id="PF03144">
    <property type="entry name" value="GTP_EFTU_D2"/>
    <property type="match status" value="1"/>
</dbReference>
<dbReference type="Pfam" id="PF06421">
    <property type="entry name" value="LepA_C"/>
    <property type="match status" value="1"/>
</dbReference>
<dbReference type="PRINTS" id="PR00315">
    <property type="entry name" value="ELONGATNFCT"/>
</dbReference>
<dbReference type="SUPFAM" id="SSF54980">
    <property type="entry name" value="EF-G C-terminal domain-like"/>
    <property type="match status" value="2"/>
</dbReference>
<dbReference type="SUPFAM" id="SSF52540">
    <property type="entry name" value="P-loop containing nucleoside triphosphate hydrolases"/>
    <property type="match status" value="1"/>
</dbReference>
<dbReference type="SUPFAM" id="SSF50447">
    <property type="entry name" value="Translation proteins"/>
    <property type="match status" value="1"/>
</dbReference>
<dbReference type="PROSITE" id="PS00301">
    <property type="entry name" value="G_TR_1"/>
    <property type="match status" value="1"/>
</dbReference>
<dbReference type="PROSITE" id="PS51722">
    <property type="entry name" value="G_TR_2"/>
    <property type="match status" value="1"/>
</dbReference>
<sequence length="607" mass="67451">MTVPLDRIRNFSIIAHIDHGKSTLADRLIQRTGGLTDREMSAQVLDNMDIEKERGITIKAQTVRLDYKAKDGQDYVLNLMDTPGHVDFAYEVSRSLAACEGALLVVDAAQGVEAQTLANVYQSIEHDHEIVPVINKIDLPAAEPDKVKAEIEDIIGLPADDAVLASAKSGIGIDEILEAIVARIPAPKGDPAAPLKAMLVDSWYDPYLGVVILIRVVEGTIRKGQQIKFMQADTVHLVDRVGCFRPKIEQLGEMGPGEIGFITAQIKEVSQTAVGDTITDARKPTAEPLPGFKEVQPVVFCGLFPVDAADFEKLRESLYKLRLNDASFSFEAESSAALGFGFRCGFLGLLHLEIIQERLTREYDLDLITTAPSVVYRLHLSHSKTEDAKVIELHNPADMPDPNRIDMIEEPWIEATIYVPDEYLGSLLKLCQDRRGIQKNLTYVGGRAQITYELPLNEVVFDFYDRLKSISRGYASFDYHQIGYREGDLVKMSIMVNGEPVDALSMIVHRAAAEARGRHMCERLKDLIPRHLFKIPVQAAIGGKVIARETIAAMRKDVTAKCYGGDATRKRKLLEKQKEGKKRMREYGNVNIPQEAFIAALRMGDEG</sequence>
<proteinExistence type="inferred from homology"/>
<organism>
    <name type="scientific">Rhizorhabdus wittichii (strain DSM 6014 / CCUG 31198 / JCM 15750 / NBRC 105917 / EY 4224 / RW1)</name>
    <name type="common">Sphingomonas wittichii</name>
    <dbReference type="NCBI Taxonomy" id="392499"/>
    <lineage>
        <taxon>Bacteria</taxon>
        <taxon>Pseudomonadati</taxon>
        <taxon>Pseudomonadota</taxon>
        <taxon>Alphaproteobacteria</taxon>
        <taxon>Sphingomonadales</taxon>
        <taxon>Sphingomonadaceae</taxon>
        <taxon>Rhizorhabdus</taxon>
    </lineage>
</organism>
<keyword id="KW-0997">Cell inner membrane</keyword>
<keyword id="KW-1003">Cell membrane</keyword>
<keyword id="KW-0342">GTP-binding</keyword>
<keyword id="KW-0378">Hydrolase</keyword>
<keyword id="KW-0472">Membrane</keyword>
<keyword id="KW-0547">Nucleotide-binding</keyword>
<keyword id="KW-0648">Protein biosynthesis</keyword>
<keyword id="KW-1185">Reference proteome</keyword>
<feature type="chain" id="PRO_1000032058" description="Elongation factor 4">
    <location>
        <begin position="1"/>
        <end position="607"/>
    </location>
</feature>
<feature type="domain" description="tr-type G">
    <location>
        <begin position="6"/>
        <end position="188"/>
    </location>
</feature>
<feature type="binding site" evidence="1">
    <location>
        <begin position="18"/>
        <end position="23"/>
    </location>
    <ligand>
        <name>GTP</name>
        <dbReference type="ChEBI" id="CHEBI:37565"/>
    </ligand>
</feature>
<feature type="binding site" evidence="1">
    <location>
        <begin position="135"/>
        <end position="138"/>
    </location>
    <ligand>
        <name>GTP</name>
        <dbReference type="ChEBI" id="CHEBI:37565"/>
    </ligand>
</feature>
<comment type="function">
    <text evidence="1">Required for accurate and efficient protein synthesis under certain stress conditions. May act as a fidelity factor of the translation reaction, by catalyzing a one-codon backward translocation of tRNAs on improperly translocated ribosomes. Back-translocation proceeds from a post-translocation (POST) complex to a pre-translocation (PRE) complex, thus giving elongation factor G a second chance to translocate the tRNAs correctly. Binds to ribosomes in a GTP-dependent manner.</text>
</comment>
<comment type="catalytic activity">
    <reaction evidence="1">
        <text>GTP + H2O = GDP + phosphate + H(+)</text>
        <dbReference type="Rhea" id="RHEA:19669"/>
        <dbReference type="ChEBI" id="CHEBI:15377"/>
        <dbReference type="ChEBI" id="CHEBI:15378"/>
        <dbReference type="ChEBI" id="CHEBI:37565"/>
        <dbReference type="ChEBI" id="CHEBI:43474"/>
        <dbReference type="ChEBI" id="CHEBI:58189"/>
        <dbReference type="EC" id="3.6.5.n1"/>
    </reaction>
</comment>
<comment type="subcellular location">
    <subcellularLocation>
        <location evidence="1">Cell inner membrane</location>
        <topology evidence="1">Peripheral membrane protein</topology>
        <orientation evidence="1">Cytoplasmic side</orientation>
    </subcellularLocation>
</comment>
<comment type="similarity">
    <text evidence="1">Belongs to the TRAFAC class translation factor GTPase superfamily. Classic translation factor GTPase family. LepA subfamily.</text>
</comment>
<accession>A5VB59</accession>
<reference key="1">
    <citation type="journal article" date="2010" name="J. Bacteriol.">
        <title>Genome sequence of the dioxin-mineralizing bacterium Sphingomonas wittichii RW1.</title>
        <authorList>
            <person name="Miller T.R."/>
            <person name="Delcher A.L."/>
            <person name="Salzberg S.L."/>
            <person name="Saunders E."/>
            <person name="Detter J.C."/>
            <person name="Halden R.U."/>
        </authorList>
    </citation>
    <scope>NUCLEOTIDE SEQUENCE [LARGE SCALE GENOMIC DNA]</scope>
    <source>
        <strain>DSM 6014 / CCUG 31198 / JCM 15750 / NBRC 105917 / EY 4224 / RW1</strain>
    </source>
</reference>